<gene>
    <name type="primary">COL1A1</name>
</gene>
<keyword id="KW-0106">Calcium</keyword>
<keyword id="KW-0176">Collagen</keyword>
<keyword id="KW-1015">Disulfide bond</keyword>
<keyword id="KW-0272">Extracellular matrix</keyword>
<keyword id="KW-0325">Glycoprotein</keyword>
<keyword id="KW-0379">Hydroxylation</keyword>
<keyword id="KW-0479">Metal-binding</keyword>
<keyword id="KW-0873">Pyrrolidone carboxylic acid</keyword>
<keyword id="KW-0677">Repeat</keyword>
<keyword id="KW-0964">Secreted</keyword>
<keyword id="KW-0732">Signal</keyword>
<feature type="signal peptide" evidence="5">
    <location>
        <begin position="1"/>
        <end position="22"/>
    </location>
</feature>
<feature type="propeptide" id="PRO_0000286160" description="N-terminal propeptide" evidence="2">
    <location>
        <begin position="23"/>
        <end position="148"/>
    </location>
</feature>
<feature type="chain" id="PRO_0000286161" description="Collagen alpha-1(I) chain" evidence="2">
    <location>
        <begin position="149"/>
        <end position="1204"/>
    </location>
</feature>
<feature type="propeptide" id="PRO_0000286162" description="C-terminal propeptide" evidence="2">
    <location>
        <begin position="1205"/>
        <end position="1450"/>
    </location>
</feature>
<feature type="domain" description="VWFC" evidence="6">
    <location>
        <begin position="31"/>
        <end position="90"/>
    </location>
</feature>
<feature type="domain" description="Fibrillar collagen NC1" evidence="7">
    <location>
        <begin position="1215"/>
        <end position="1450"/>
    </location>
</feature>
<feature type="region of interest" description="Disordered" evidence="8">
    <location>
        <begin position="97"/>
        <end position="1201"/>
    </location>
</feature>
<feature type="compositionally biased region" description="Basic and acidic residues" evidence="8">
    <location>
        <begin position="106"/>
        <end position="116"/>
    </location>
</feature>
<feature type="compositionally biased region" description="Pro residues" evidence="8">
    <location>
        <begin position="130"/>
        <end position="140"/>
    </location>
</feature>
<feature type="compositionally biased region" description="Pro residues" evidence="8">
    <location>
        <begin position="166"/>
        <end position="181"/>
    </location>
</feature>
<feature type="compositionally biased region" description="Low complexity" evidence="8">
    <location>
        <begin position="182"/>
        <end position="206"/>
    </location>
</feature>
<feature type="compositionally biased region" description="Basic and acidic residues" evidence="8">
    <location>
        <begin position="215"/>
        <end position="229"/>
    </location>
</feature>
<feature type="compositionally biased region" description="Low complexity" evidence="8">
    <location>
        <begin position="266"/>
        <end position="292"/>
    </location>
</feature>
<feature type="compositionally biased region" description="Pro residues" evidence="8">
    <location>
        <begin position="317"/>
        <end position="331"/>
    </location>
</feature>
<feature type="compositionally biased region" description="Low complexity" evidence="8">
    <location>
        <begin position="352"/>
        <end position="374"/>
    </location>
</feature>
<feature type="compositionally biased region" description="Gly residues" evidence="8">
    <location>
        <begin position="378"/>
        <end position="387"/>
    </location>
</feature>
<feature type="compositionally biased region" description="Low complexity" evidence="8">
    <location>
        <begin position="388"/>
        <end position="443"/>
    </location>
</feature>
<feature type="compositionally biased region" description="Gly residues" evidence="8">
    <location>
        <begin position="471"/>
        <end position="480"/>
    </location>
</feature>
<feature type="compositionally biased region" description="Low complexity" evidence="8">
    <location>
        <begin position="568"/>
        <end position="578"/>
    </location>
</feature>
<feature type="compositionally biased region" description="Low complexity" evidence="8">
    <location>
        <begin position="586"/>
        <end position="596"/>
    </location>
</feature>
<feature type="compositionally biased region" description="Low complexity" evidence="8">
    <location>
        <begin position="637"/>
        <end position="650"/>
    </location>
</feature>
<feature type="compositionally biased region" description="Gly residues" evidence="8">
    <location>
        <begin position="669"/>
        <end position="678"/>
    </location>
</feature>
<feature type="compositionally biased region" description="Low complexity" evidence="8">
    <location>
        <begin position="679"/>
        <end position="701"/>
    </location>
</feature>
<feature type="compositionally biased region" description="Gly residues" evidence="8">
    <location>
        <begin position="702"/>
        <end position="711"/>
    </location>
</feature>
<feature type="compositionally biased region" description="Low complexity" evidence="8">
    <location>
        <begin position="796"/>
        <end position="806"/>
    </location>
</feature>
<feature type="compositionally biased region" description="Low complexity" evidence="8">
    <location>
        <begin position="817"/>
        <end position="869"/>
    </location>
</feature>
<feature type="compositionally biased region" description="Low complexity" evidence="8">
    <location>
        <begin position="917"/>
        <end position="943"/>
    </location>
</feature>
<feature type="compositionally biased region" description="Pro residues" evidence="8">
    <location>
        <begin position="982"/>
        <end position="997"/>
    </location>
</feature>
<feature type="compositionally biased region" description="Pro residues" evidence="8">
    <location>
        <begin position="1028"/>
        <end position="1043"/>
    </location>
</feature>
<feature type="compositionally biased region" description="Low complexity" evidence="8">
    <location>
        <begin position="1064"/>
        <end position="1078"/>
    </location>
</feature>
<feature type="compositionally biased region" description="Basic and acidic residues" evidence="8">
    <location>
        <begin position="1079"/>
        <end position="1093"/>
    </location>
</feature>
<feature type="compositionally biased region" description="Pro residues" evidence="8">
    <location>
        <begin position="1120"/>
        <end position="1129"/>
    </location>
</feature>
<feature type="compositionally biased region" description="Low complexity" evidence="8">
    <location>
        <begin position="1130"/>
        <end position="1145"/>
    </location>
</feature>
<feature type="compositionally biased region" description="Pro residues" evidence="8">
    <location>
        <begin position="1163"/>
        <end position="1178"/>
    </location>
</feature>
<feature type="binding site" evidence="1">
    <location>
        <position position="1263"/>
    </location>
    <ligand>
        <name>Ca(2+)</name>
        <dbReference type="ChEBI" id="CHEBI:29108"/>
    </ligand>
</feature>
<feature type="binding site" evidence="1">
    <location>
        <position position="1265"/>
    </location>
    <ligand>
        <name>Ca(2+)</name>
        <dbReference type="ChEBI" id="CHEBI:29108"/>
    </ligand>
</feature>
<feature type="binding site" evidence="1">
    <location>
        <position position="1266"/>
    </location>
    <ligand>
        <name>Ca(2+)</name>
        <dbReference type="ChEBI" id="CHEBI:29108"/>
    </ligand>
</feature>
<feature type="binding site" evidence="1">
    <location>
        <position position="1268"/>
    </location>
    <ligand>
        <name>Ca(2+)</name>
        <dbReference type="ChEBI" id="CHEBI:29108"/>
    </ligand>
</feature>
<feature type="binding site" evidence="1">
    <location>
        <position position="1271"/>
    </location>
    <ligand>
        <name>Ca(2+)</name>
        <dbReference type="ChEBI" id="CHEBI:29108"/>
    </ligand>
</feature>
<feature type="modified residue" description="Pyrrolidone carboxylic acid" evidence="2">
    <location>
        <position position="149"/>
    </location>
</feature>
<feature type="modified residue" description="Allysine" evidence="2">
    <location>
        <position position="157"/>
    </location>
</feature>
<feature type="modified residue" description="4-hydroxyproline" evidence="3">
    <location>
        <position position="176"/>
    </location>
</feature>
<feature type="modified residue" description="4-hydroxyproline" evidence="3">
    <location>
        <position position="182"/>
    </location>
</feature>
<feature type="modified residue" description="4-hydroxyproline" evidence="3">
    <location>
        <position position="194"/>
    </location>
</feature>
<feature type="modified residue" description="4-hydroxyproline" evidence="3">
    <location>
        <position position="197"/>
    </location>
</feature>
<feature type="modified residue" description="4-hydroxyproline" evidence="3">
    <location>
        <position position="212"/>
    </location>
</feature>
<feature type="modified residue" description="4-hydroxyproline" evidence="3">
    <location>
        <position position="227"/>
    </location>
</feature>
<feature type="modified residue" description="4-hydroxyproline" evidence="3">
    <location>
        <position position="242"/>
    </location>
</feature>
<feature type="modified residue" description="4-hydroxyproline" evidence="3">
    <location>
        <position position="248"/>
    </location>
</feature>
<feature type="modified residue" description="5-hydroxylysine; alternate" evidence="4">
    <location>
        <position position="251"/>
    </location>
</feature>
<feature type="modified residue" description="4-hydroxyproline" evidence="3">
    <location>
        <position position="275"/>
    </location>
</feature>
<feature type="modified residue" description="4-hydroxyproline" evidence="3">
    <location>
        <position position="278"/>
    </location>
</feature>
<feature type="modified residue" description="4-hydroxyproline" evidence="3">
    <location>
        <position position="284"/>
    </location>
</feature>
<feature type="modified residue" description="4-hydroxyproline" evidence="3">
    <location>
        <position position="293"/>
    </location>
</feature>
<feature type="modified residue" description="4-hydroxyproline" evidence="3">
    <location>
        <position position="299"/>
    </location>
</feature>
<feature type="modified residue" description="4-hydroxyproline" evidence="3">
    <location>
        <position position="314"/>
    </location>
</feature>
<feature type="modified residue" description="4-hydroxyproline" evidence="3">
    <location>
        <position position="320"/>
    </location>
</feature>
<feature type="modified residue" description="4-hydroxyproline" evidence="3">
    <location>
        <position position="329"/>
    </location>
</feature>
<feature type="modified residue" description="4-hydroxyproline" evidence="3">
    <location>
        <position position="332"/>
    </location>
</feature>
<feature type="modified residue" description="4-hydroxyproline" evidence="3">
    <location>
        <position position="359"/>
    </location>
</feature>
<feature type="modified residue" description="4-hydroxyproline" evidence="3">
    <location>
        <position position="362"/>
    </location>
</feature>
<feature type="modified residue" description="4-hydroxyproline" evidence="3">
    <location>
        <position position="374"/>
    </location>
</feature>
<feature type="modified residue" description="4-hydroxyproline" evidence="3">
    <location>
        <position position="380"/>
    </location>
</feature>
<feature type="modified residue" description="4-hydroxyproline" evidence="3">
    <location>
        <position position="389"/>
    </location>
</feature>
<feature type="modified residue" description="4-hydroxyproline" evidence="3">
    <location>
        <position position="395"/>
    </location>
</feature>
<feature type="modified residue" description="4-hydroxyproline" evidence="3">
    <location>
        <position position="398"/>
    </location>
</feature>
<feature type="modified residue" description="4-hydroxyproline" evidence="3">
    <location>
        <position position="413"/>
    </location>
</feature>
<feature type="modified residue" description="5-hydroxylysine" evidence="3">
    <location>
        <position position="416"/>
    </location>
</feature>
<feature type="modified residue" description="4-hydroxyproline" evidence="3">
    <location>
        <position position="422"/>
    </location>
</feature>
<feature type="modified residue" description="4-hydroxyproline" evidence="3">
    <location>
        <position position="437"/>
    </location>
</feature>
<feature type="modified residue" description="4-hydroxyproline" evidence="3">
    <location>
        <position position="446"/>
    </location>
</feature>
<feature type="modified residue" description="4-hydroxyproline" evidence="3">
    <location>
        <position position="461"/>
    </location>
</feature>
<feature type="modified residue" description="4-hydroxyproline" evidence="3">
    <location>
        <position position="467"/>
    </location>
</feature>
<feature type="modified residue" description="4-hydroxyproline" evidence="3">
    <location>
        <position position="476"/>
    </location>
</feature>
<feature type="modified residue" description="4-hydroxyproline" evidence="3">
    <location>
        <position position="482"/>
    </location>
</feature>
<feature type="modified residue" description="5-hydroxylysine" evidence="3">
    <location>
        <position position="491"/>
    </location>
</feature>
<feature type="modified residue" description="4-hydroxyproline" evidence="3">
    <location>
        <position position="494"/>
    </location>
</feature>
<feature type="modified residue" description="4-hydroxyproline" evidence="3">
    <location>
        <position position="515"/>
    </location>
</feature>
<feature type="modified residue" description="4-hydroxyproline" evidence="3">
    <location>
        <position position="521"/>
    </location>
</feature>
<feature type="modified residue" description="4-hydroxyproline" evidence="3">
    <location>
        <position position="530"/>
    </location>
</feature>
<feature type="modified residue" description="4-hydroxyproline" evidence="3">
    <location>
        <position position="533"/>
    </location>
</feature>
<feature type="modified residue" description="4-hydroxyproline" evidence="3">
    <location>
        <position position="551"/>
    </location>
</feature>
<feature type="modified residue" description="4-hydroxyproline" evidence="3">
    <location>
        <position position="569"/>
    </location>
</feature>
<feature type="modified residue" description="4-hydroxyproline" evidence="3">
    <location>
        <position position="578"/>
    </location>
</feature>
<feature type="modified residue" description="4-hydroxyproline" evidence="3">
    <location>
        <position position="590"/>
    </location>
</feature>
<feature type="modified residue" description="4-hydroxyproline" evidence="3">
    <location>
        <position position="608"/>
    </location>
</feature>
<feature type="modified residue" description="4-hydroxyproline" evidence="3">
    <location>
        <position position="626"/>
    </location>
</feature>
<feature type="modified residue" description="4-hydroxyproline" evidence="3">
    <location>
        <position position="632"/>
    </location>
</feature>
<feature type="modified residue" description="4-hydroxyproline" evidence="3">
    <location>
        <position position="644"/>
    </location>
</feature>
<feature type="modified residue" description="4-hydroxyproline" evidence="3">
    <location>
        <position position="650"/>
    </location>
</feature>
<feature type="modified residue" description="4-hydroxyproline" evidence="3">
    <location>
        <position position="656"/>
    </location>
</feature>
<feature type="modified residue" description="4-hydroxyproline" evidence="3">
    <location>
        <position position="668"/>
    </location>
</feature>
<feature type="modified residue" description="4-hydroxyproline" evidence="3">
    <location>
        <position position="689"/>
    </location>
</feature>
<feature type="modified residue" description="4-hydroxyproline" evidence="3">
    <location>
        <position position="704"/>
    </location>
</feature>
<feature type="modified residue" description="4-hydroxyproline" evidence="3">
    <location>
        <position position="710"/>
    </location>
</feature>
<feature type="modified residue" description="4-hydroxyproline" evidence="3">
    <location>
        <position position="716"/>
    </location>
</feature>
<feature type="modified residue" description="4-hydroxyproline" evidence="3">
    <location>
        <position position="725"/>
    </location>
</feature>
<feature type="modified residue" description="5-hydroxylysine" evidence="3">
    <location>
        <position position="737"/>
    </location>
</feature>
<feature type="modified residue" description="4-hydroxyproline" evidence="3">
    <location>
        <position position="743"/>
    </location>
</feature>
<feature type="modified residue" description="4-hydroxyproline" evidence="3">
    <location>
        <position position="758"/>
    </location>
</feature>
<feature type="modified residue" description="4-hydroxyproline" evidence="3">
    <location>
        <position position="764"/>
    </location>
</feature>
<feature type="modified residue" description="4-hydroxyproline" evidence="3">
    <location>
        <position position="785"/>
    </location>
</feature>
<feature type="modified residue" description="4-hydroxyproline" evidence="3">
    <location>
        <position position="791"/>
    </location>
</feature>
<feature type="modified residue" description="4-hydroxyproline" evidence="3">
    <location>
        <position position="794"/>
    </location>
</feature>
<feature type="modified residue" description="4-hydroxyproline" evidence="3">
    <location>
        <position position="803"/>
    </location>
</feature>
<feature type="modified residue" description="4-hydroxyproline" evidence="3">
    <location>
        <position position="809"/>
    </location>
</feature>
<feature type="modified residue" description="4-hydroxyproline" evidence="3">
    <location>
        <position position="827"/>
    </location>
</feature>
<feature type="modified residue" description="4-hydroxyproline" evidence="3">
    <location>
        <position position="836"/>
    </location>
</feature>
<feature type="modified residue" description="4-hydroxyproline" evidence="3">
    <location>
        <position position="845"/>
    </location>
</feature>
<feature type="modified residue" description="5-hydroxylysine" evidence="3">
    <location>
        <position position="848"/>
    </location>
</feature>
<feature type="modified residue" description="4-hydroxyproline" evidence="3">
    <location>
        <position position="857"/>
    </location>
</feature>
<feature type="modified residue" description="4-hydroxyproline" evidence="3">
    <location>
        <position position="863"/>
    </location>
</feature>
<feature type="modified residue" description="3-hydroxyproline" evidence="4">
    <location>
        <position position="871"/>
    </location>
</feature>
<feature type="modified residue" description="4-hydroxyproline" evidence="4">
    <location>
        <position position="872"/>
    </location>
</feature>
<feature type="modified residue" description="4-hydroxyproline" evidence="4">
    <location>
        <position position="881"/>
    </location>
</feature>
<feature type="modified residue" description="4-hydroxyproline" evidence="4">
    <location>
        <position position="884"/>
    </location>
</feature>
<feature type="modified residue" description="4-hydroxyproline" evidence="3">
    <location>
        <position position="908"/>
    </location>
</feature>
<feature type="modified residue" description="4-hydroxyproline" evidence="3">
    <location>
        <position position="914"/>
    </location>
</feature>
<feature type="modified residue" description="4-hydroxyproline" evidence="3">
    <location>
        <position position="923"/>
    </location>
</feature>
<feature type="modified residue" description="4-hydroxyproline" evidence="3">
    <location>
        <position position="932"/>
    </location>
</feature>
<feature type="modified residue" description="4-hydroxyproline" evidence="3">
    <location>
        <position position="950"/>
    </location>
</feature>
<feature type="modified residue" description="4-hydroxyproline" evidence="3">
    <location>
        <position position="962"/>
    </location>
</feature>
<feature type="modified residue" description="4-hydroxyproline" evidence="3">
    <location>
        <position position="968"/>
    </location>
</feature>
<feature type="modified residue" description="4-hydroxyproline" evidence="3">
    <location>
        <position position="983"/>
    </location>
</feature>
<feature type="modified residue" description="4-hydroxyproline" evidence="3">
    <location>
        <position position="989"/>
    </location>
</feature>
<feature type="modified residue" description="4-hydroxyproline" evidence="3">
    <location>
        <position position="995"/>
    </location>
</feature>
<feature type="modified residue" description="4-hydroxyproline" evidence="3">
    <location>
        <position position="1004"/>
    </location>
</feature>
<feature type="modified residue" description="4-hydroxyproline" evidence="3">
    <location>
        <position position="1010"/>
    </location>
</feature>
<feature type="modified residue" description="5-hydroxylysine" evidence="3">
    <location>
        <position position="1019"/>
    </location>
</feature>
<feature type="modified residue" description="4-hydroxyproline" evidence="3">
    <location>
        <position position="1031"/>
    </location>
</feature>
<feature type="modified residue" description="4-hydroxyproline" evidence="3">
    <location>
        <position position="1034"/>
    </location>
</feature>
<feature type="modified residue" description="4-hydroxyproline" evidence="3">
    <location>
        <position position="1037"/>
    </location>
</feature>
<feature type="modified residue" description="5-hydroxylysine" evidence="3">
    <location>
        <position position="1082"/>
    </location>
</feature>
<feature type="modified residue" description="5-hydroxylysine; alternate" evidence="4">
    <location>
        <position position="1094"/>
    </location>
</feature>
<feature type="modified residue" description="4-hydroxyproline" evidence="3">
    <location>
        <position position="1106"/>
    </location>
</feature>
<feature type="modified residue" description="4-hydroxyproline" evidence="3">
    <location>
        <position position="1109"/>
    </location>
</feature>
<feature type="modified residue" description="4-hydroxyproline" evidence="3">
    <location>
        <position position="1130"/>
    </location>
</feature>
<feature type="modified residue" description="4-hydroxyproline" evidence="3">
    <location>
        <position position="1145"/>
    </location>
</feature>
<feature type="modified residue" description="3-hydroxyproline" evidence="4">
    <location>
        <position position="1150"/>
    </location>
</feature>
<feature type="modified residue" description="4-hydroxyproline" evidence="3">
    <location>
        <position position="1151"/>
    </location>
</feature>
<feature type="modified residue" description="3-hydroxyproline" evidence="4">
    <location>
        <position position="1165"/>
    </location>
</feature>
<feature type="modified residue" description="4-hydroxyproline" evidence="4">
    <location>
        <position position="1166"/>
    </location>
</feature>
<feature type="modified residue" description="3-hydroxyproline" evidence="4">
    <location>
        <position position="1168"/>
    </location>
</feature>
<feature type="modified residue" description="4-hydroxyproline" evidence="4">
    <location>
        <position position="1169"/>
    </location>
</feature>
<feature type="modified residue" description="3-hydroxyproline" evidence="4">
    <location>
        <position position="1171"/>
    </location>
</feature>
<feature type="modified residue" description="4-hydroxyproline" evidence="4">
    <location>
        <position position="1172"/>
    </location>
</feature>
<feature type="modified residue" description="4-hydroxyproline" evidence="4">
    <location>
        <position position="1175"/>
    </location>
</feature>
<feature type="modified residue" description="4-hydroxyproline" evidence="4">
    <location>
        <position position="1178"/>
    </location>
</feature>
<feature type="modified residue" description="Allysine" evidence="2">
    <location>
        <position position="1194"/>
    </location>
</feature>
<feature type="glycosylation site" description="O-linked (Gal...) hydroxylysine; alternate" evidence="3">
    <location>
        <position position="251"/>
    </location>
</feature>
<feature type="glycosylation site" description="O-linked (Gal...) hydroxylysine; alternate" evidence="3">
    <location>
        <position position="1094"/>
    </location>
</feature>
<feature type="glycosylation site" description="N-linked (GlcNAc...) asparagine" evidence="5">
    <location>
        <position position="1351"/>
    </location>
</feature>
<feature type="disulfide bond" evidence="7">
    <location>
        <begin position="1245"/>
        <end position="1277"/>
    </location>
</feature>
<feature type="disulfide bond" description="Interchain (with C-1268)" evidence="7">
    <location>
        <position position="1251"/>
    </location>
</feature>
<feature type="disulfide bond" description="Interchain (with C-1251)" evidence="7">
    <location>
        <position position="1268"/>
    </location>
</feature>
<feature type="disulfide bond" evidence="7">
    <location>
        <begin position="1285"/>
        <end position="1448"/>
    </location>
</feature>
<feature type="disulfide bond" evidence="7">
    <location>
        <begin position="1356"/>
        <end position="1401"/>
    </location>
</feature>
<organism>
    <name type="scientific">Cynops pyrrhogaster</name>
    <name type="common">Japanese fire-bellied newt</name>
    <name type="synonym">Molge pyrrhogaster</name>
    <dbReference type="NCBI Taxonomy" id="8330"/>
    <lineage>
        <taxon>Eukaryota</taxon>
        <taxon>Metazoa</taxon>
        <taxon>Chordata</taxon>
        <taxon>Craniata</taxon>
        <taxon>Vertebrata</taxon>
        <taxon>Euteleostomi</taxon>
        <taxon>Amphibia</taxon>
        <taxon>Batrachia</taxon>
        <taxon>Caudata</taxon>
        <taxon>Salamandroidea</taxon>
        <taxon>Salamandridae</taxon>
        <taxon>Pleurodelinae</taxon>
        <taxon>Cynops</taxon>
    </lineage>
</organism>
<protein>
    <recommendedName>
        <fullName>Collagen alpha-1(I) chain</fullName>
    </recommendedName>
    <alternativeName>
        <fullName>Alpha-1 type I collagen</fullName>
    </alternativeName>
</protein>
<accession>Q9YIB4</accession>
<proteinExistence type="evidence at transcript level"/>
<dbReference type="EMBL" id="AB015438">
    <property type="protein sequence ID" value="BAA36973.1"/>
    <property type="molecule type" value="mRNA"/>
</dbReference>
<dbReference type="SMR" id="Q9YIB4"/>
<dbReference type="GlyCosmos" id="Q9YIB4">
    <property type="glycosylation" value="3 sites, No reported glycans"/>
</dbReference>
<dbReference type="GO" id="GO:0005581">
    <property type="term" value="C:collagen trimer"/>
    <property type="evidence" value="ECO:0007669"/>
    <property type="project" value="UniProtKB-KW"/>
</dbReference>
<dbReference type="GO" id="GO:0031012">
    <property type="term" value="C:extracellular matrix"/>
    <property type="evidence" value="ECO:0007669"/>
    <property type="project" value="TreeGrafter"/>
</dbReference>
<dbReference type="GO" id="GO:0005615">
    <property type="term" value="C:extracellular space"/>
    <property type="evidence" value="ECO:0007669"/>
    <property type="project" value="TreeGrafter"/>
</dbReference>
<dbReference type="GO" id="GO:0005201">
    <property type="term" value="F:extracellular matrix structural constituent"/>
    <property type="evidence" value="ECO:0007669"/>
    <property type="project" value="InterPro"/>
</dbReference>
<dbReference type="GO" id="GO:0046872">
    <property type="term" value="F:metal ion binding"/>
    <property type="evidence" value="ECO:0007669"/>
    <property type="project" value="UniProtKB-KW"/>
</dbReference>
<dbReference type="FunFam" id="2.60.120.1000:FF:000001">
    <property type="entry name" value="Collagen alpha-1 type I chain"/>
    <property type="match status" value="1"/>
</dbReference>
<dbReference type="FunFam" id="2.10.70.10:FF:000013">
    <property type="entry name" value="Collagen, type I, alpha 1"/>
    <property type="match status" value="1"/>
</dbReference>
<dbReference type="Gene3D" id="2.60.120.1000">
    <property type="match status" value="1"/>
</dbReference>
<dbReference type="Gene3D" id="2.10.70.10">
    <property type="entry name" value="Complement Module, domain 1"/>
    <property type="match status" value="1"/>
</dbReference>
<dbReference type="InterPro" id="IPR008160">
    <property type="entry name" value="Collagen"/>
</dbReference>
<dbReference type="InterPro" id="IPR050149">
    <property type="entry name" value="Collagen_superfamily"/>
</dbReference>
<dbReference type="InterPro" id="IPR000885">
    <property type="entry name" value="Fib_collagen_C"/>
</dbReference>
<dbReference type="InterPro" id="IPR001007">
    <property type="entry name" value="VWF_dom"/>
</dbReference>
<dbReference type="PANTHER" id="PTHR24023">
    <property type="entry name" value="COLLAGEN ALPHA"/>
    <property type="match status" value="1"/>
</dbReference>
<dbReference type="PANTHER" id="PTHR24023:SF1082">
    <property type="entry name" value="COLLAGEN TRIPLE HELIX REPEAT"/>
    <property type="match status" value="1"/>
</dbReference>
<dbReference type="Pfam" id="PF01410">
    <property type="entry name" value="COLFI"/>
    <property type="match status" value="1"/>
</dbReference>
<dbReference type="Pfam" id="PF01391">
    <property type="entry name" value="Collagen"/>
    <property type="match status" value="7"/>
</dbReference>
<dbReference type="Pfam" id="PF00093">
    <property type="entry name" value="VWC"/>
    <property type="match status" value="1"/>
</dbReference>
<dbReference type="SMART" id="SM00038">
    <property type="entry name" value="COLFI"/>
    <property type="match status" value="1"/>
</dbReference>
<dbReference type="SMART" id="SM00214">
    <property type="entry name" value="VWC"/>
    <property type="match status" value="1"/>
</dbReference>
<dbReference type="SUPFAM" id="SSF57603">
    <property type="entry name" value="FnI-like domain"/>
    <property type="match status" value="1"/>
</dbReference>
<dbReference type="PROSITE" id="PS51461">
    <property type="entry name" value="NC1_FIB"/>
    <property type="match status" value="1"/>
</dbReference>
<dbReference type="PROSITE" id="PS01208">
    <property type="entry name" value="VWFC_1"/>
    <property type="match status" value="1"/>
</dbReference>
<dbReference type="PROSITE" id="PS50184">
    <property type="entry name" value="VWFC_2"/>
    <property type="match status" value="1"/>
</dbReference>
<name>CO1A1_CYNPY</name>
<reference key="1">
    <citation type="journal article" date="1999" name="Dev. Dyn.">
        <title>Expression of genes of type I and type II collagen in the formation and development of the blastema of regenerating newt limb.</title>
        <authorList>
            <person name="Asahina K."/>
            <person name="Obara M."/>
            <person name="Yoshizato K."/>
        </authorList>
    </citation>
    <scope>NUCLEOTIDE SEQUENCE [MRNA]</scope>
    <source>
        <tissue>Regenerating forelimb blastema</tissue>
    </source>
</reference>
<evidence type="ECO:0000250" key="1"/>
<evidence type="ECO:0000250" key="2">
    <source>
        <dbReference type="UniProtKB" id="P02452"/>
    </source>
</evidence>
<evidence type="ECO:0000250" key="3">
    <source>
        <dbReference type="UniProtKB" id="P02457"/>
    </source>
</evidence>
<evidence type="ECO:0000250" key="4">
    <source>
        <dbReference type="UniProtKB" id="P11087"/>
    </source>
</evidence>
<evidence type="ECO:0000255" key="5"/>
<evidence type="ECO:0000255" key="6">
    <source>
        <dbReference type="PROSITE-ProRule" id="PRU00220"/>
    </source>
</evidence>
<evidence type="ECO:0000255" key="7">
    <source>
        <dbReference type="PROSITE-ProRule" id="PRU00793"/>
    </source>
</evidence>
<evidence type="ECO:0000256" key="8">
    <source>
        <dbReference type="SAM" id="MobiDB-lite"/>
    </source>
</evidence>
<comment type="function">
    <text evidence="1">Type I collagen is a member of group I collagen (fibrillar forming collagen).</text>
</comment>
<comment type="subunit">
    <text evidence="1">Trimers of one alpha 2(I) and two alpha 1(I) chains.</text>
</comment>
<comment type="subcellular location">
    <subcellularLocation>
        <location evidence="7">Secreted</location>
        <location evidence="7">Extracellular space</location>
        <location evidence="7">Extracellular matrix</location>
    </subcellularLocation>
</comment>
<comment type="domain">
    <text evidence="1">The C-terminal propeptide, also known as COLFI domain, have crucial roles in tissue growth and repair by controlling both the intracellular assembly of procollagen molecules and the extracellular assembly of collagen fibrils. It binds a calcium ion which is essential for its function (By similarity).</text>
</comment>
<comment type="PTM">
    <text evidence="4">Contains mostly 4-hydroxyproline. Proline residues at the third position of the tripeptide repeating unit (G-X-Y) are hydroxylated in some or all of the chains.</text>
</comment>
<comment type="PTM">
    <text evidence="4">Contains 3-hydroxyproline at a few sites. This modification occurs on the first proline residue in the sequence motif Gly-Pro-Hyp, where Hyp is 4-hydroxyproline.</text>
</comment>
<comment type="PTM">
    <text evidence="3">Lysine residues at the third position of the tripeptide repeating unit (G-X-Y) are 5-hydroxylated in some or all of the chains.</text>
</comment>
<comment type="PTM">
    <text evidence="4">O-glycosylated on hydroxylated lysine residues. The O-linked glycan consists of a Glc-Gal disaccharide.</text>
</comment>
<comment type="similarity">
    <text evidence="7">Belongs to the fibrillar collagen family.</text>
</comment>
<sequence length="1450" mass="137563">MFSFVDNRLLVLLAACVLLVRALDQEDIESGLCHQEGTTYSDKDVWKPEPCVICVCDNGNIMCDDVTCGDYPVDCPNAEIPFGECCPVCPDGDGTSYSEQTGVEGPKGEVGPKGDRGLPGPPGRDGNPGLPGPPGPPGPPGLGGNFAPQMSYGYDEKSAGISVPGPMGPMGPRGPPGPSGSPGPQGFQGPSGEPGEPGAAGALGPRGLPGPPGKNGDDGESGKPGRPGERGPSGPQGARGLPGTAGLPGMKGHRGFNGLDGAKGDNGPAGPKGEPGNPGENGAPGQAGPRGLPGERGRPGAPGPAGARGNDGSPGAAGPPGPTGPTGPPGFPGAVGAKGDAGPQGSRGSEGPQGARGEPGAPGPAGAAGPSGNPGTDGQPGGKGATGSPGIAGAPGFPGARGAPGPQGPAGAPGPKGNNGEPGAQGNKGEPGAKGEPGPAGVQGPPGPSGEEGKRGSRGEPGPAGPPGPAGERGGPGSRGFPGSDGASGPKGAPGERGSVGPAGPKGSTGESGRPGEPGLPGAKGLTGSPGSPGPDGKTGPAGAAGQDGHPGPPGPSGARGQSGVMGFPGPKGAAGEPGKSGERGVAGPPGATGAPGKDGEAGAQGPPGPSGPSGERGEQGPAGSPGFQGLPGSPGPAGEAGKPGEQGAPGDAGGPGPSGPRGERGFPGERGGQGPAGAQGPRGSPGSPGNDGAKGEAGAAGAPGGRGPPGLQGMPGERGSAGMPGAKGDRGDAGTKGADGAPGKDGARGLTGPIGPPGPSGAPGDKGEGGPSGPAGPTGARGSPGERGEPGAPGPAGICGPPGADGQPGAKGESGDAGPKGDAGAPGPAGPTGAPGPAGNVGAPGPKGTRGAAGPPGATGFPGAAGRLGPPGPSGNAGPPGPPGPGGKEGAKGSRGETGPAGRSGEPGPAGPPGPSGEKGSPGSDGPAGAPGIPGPQGIAGQRGVVGLPGQRGERGFSGLPGPAGEPGKQGPSGPNGERGPPGPSGPPGLGGPPGEPGREGSPGSEGAPGRDGSPGPKGDRGENGPSGPPGAPGAPGAPGPVGPAGKNGDRGETGPAGPAGPAGPSGVRGAPGPAGARGDKGEAGEQGERGMKGHRGFNGMQGPPGPPGSSGEQGAPGPSGPAGPRGPPGSSGSTGKDGVNGLPGPIGPPGPRGRNGDVGPAGPPGPPGPPGPPGPPSGGFDFSFMPQPPEPKSHGDGRYFRADDANVVRDRDLEVDTTLKSLSAQIENIRSPEGTRKNPARTCRDLKMCHSDWKSGDYWIDPNQGCNLDAIKVHCNMETGETCVYPSQASISQKNWYTSKNPREKKHVWFGETMSDGFQFEYGGEGSDPADVNIQLTFLRLMATEASQNITYHCKNSVAYMDQETGNLKKAVLLQGSNEIEIRAEGNSRFTYGVTEDGCTQHTGEWGKTVIEYKTTKTSRLPIIDIAPMDVGTPDQEFGIDIGPVCFL</sequence>